<feature type="chain" id="PRO_0000295387" description="Polyadenylate-binding protein, cytoplasmic and nuclear">
    <location>
        <begin position="1"/>
        <end position="768"/>
    </location>
</feature>
<feature type="domain" description="RRM 1" evidence="2">
    <location>
        <begin position="55"/>
        <end position="133"/>
    </location>
</feature>
<feature type="domain" description="RRM 2" evidence="2">
    <location>
        <begin position="143"/>
        <end position="220"/>
    </location>
</feature>
<feature type="domain" description="RRM 3" evidence="2">
    <location>
        <begin position="236"/>
        <end position="314"/>
    </location>
</feature>
<feature type="domain" description="RRM 4" evidence="2">
    <location>
        <begin position="340"/>
        <end position="470"/>
    </location>
</feature>
<feature type="domain" description="PABC" evidence="3">
    <location>
        <begin position="662"/>
        <end position="739"/>
    </location>
</feature>
<feature type="region of interest" description="Disordered" evidence="4">
    <location>
        <begin position="1"/>
        <end position="52"/>
    </location>
</feature>
<feature type="region of interest" description="Disordered" evidence="4">
    <location>
        <begin position="374"/>
        <end position="428"/>
    </location>
</feature>
<feature type="region of interest" description="Disordered" evidence="4">
    <location>
        <begin position="633"/>
        <end position="662"/>
    </location>
</feature>
<feature type="region of interest" description="Disordered" evidence="4">
    <location>
        <begin position="739"/>
        <end position="768"/>
    </location>
</feature>
<feature type="compositionally biased region" description="Polar residues" evidence="4">
    <location>
        <begin position="1"/>
        <end position="11"/>
    </location>
</feature>
<feature type="compositionally biased region" description="Low complexity" evidence="4">
    <location>
        <begin position="39"/>
        <end position="52"/>
    </location>
</feature>
<feature type="compositionally biased region" description="Gly residues" evidence="4">
    <location>
        <begin position="637"/>
        <end position="646"/>
    </location>
</feature>
<feature type="compositionally biased region" description="Basic and acidic residues" evidence="4">
    <location>
        <begin position="753"/>
        <end position="768"/>
    </location>
</feature>
<accession>Q1DXH0</accession>
<accession>J3KF72</accession>
<protein>
    <recommendedName>
        <fullName>Polyadenylate-binding protein, cytoplasmic and nuclear</fullName>
        <shortName>PABP</shortName>
        <shortName>Poly(A)-binding protein</shortName>
    </recommendedName>
    <alternativeName>
        <fullName>Polyadenylate tail-binding protein</fullName>
    </alternativeName>
</protein>
<gene>
    <name type="primary">PAB1</name>
    <name type="ORF">CIMG_04993</name>
</gene>
<name>PABP_COCIM</name>
<proteinExistence type="inferred from homology"/>
<dbReference type="EMBL" id="GG704914">
    <property type="protein sequence ID" value="EAS33969.3"/>
    <property type="molecule type" value="Genomic_DNA"/>
</dbReference>
<dbReference type="RefSeq" id="XP_001245552.1">
    <property type="nucleotide sequence ID" value="XM_001245551.2"/>
</dbReference>
<dbReference type="SMR" id="Q1DXH0"/>
<dbReference type="FunCoup" id="Q1DXH0">
    <property type="interactions" value="1234"/>
</dbReference>
<dbReference type="STRING" id="246410.Q1DXH0"/>
<dbReference type="GeneID" id="4563957"/>
<dbReference type="KEGG" id="cim:CIMG_04993"/>
<dbReference type="VEuPathDB" id="FungiDB:CIMG_04993"/>
<dbReference type="InParanoid" id="Q1DXH0"/>
<dbReference type="OMA" id="QQPGFMP"/>
<dbReference type="OrthoDB" id="19742at2759"/>
<dbReference type="Proteomes" id="UP000001261">
    <property type="component" value="Unassembled WGS sequence"/>
</dbReference>
<dbReference type="GO" id="GO:0005737">
    <property type="term" value="C:cytoplasm"/>
    <property type="evidence" value="ECO:0007669"/>
    <property type="project" value="UniProtKB-SubCell"/>
</dbReference>
<dbReference type="GO" id="GO:0005634">
    <property type="term" value="C:nucleus"/>
    <property type="evidence" value="ECO:0007669"/>
    <property type="project" value="UniProtKB-SubCell"/>
</dbReference>
<dbReference type="GO" id="GO:0003723">
    <property type="term" value="F:RNA binding"/>
    <property type="evidence" value="ECO:0007669"/>
    <property type="project" value="UniProtKB-KW"/>
</dbReference>
<dbReference type="GO" id="GO:0006397">
    <property type="term" value="P:mRNA processing"/>
    <property type="evidence" value="ECO:0007669"/>
    <property type="project" value="UniProtKB-KW"/>
</dbReference>
<dbReference type="GO" id="GO:0051028">
    <property type="term" value="P:mRNA transport"/>
    <property type="evidence" value="ECO:0007669"/>
    <property type="project" value="UniProtKB-KW"/>
</dbReference>
<dbReference type="GO" id="GO:0006417">
    <property type="term" value="P:regulation of translation"/>
    <property type="evidence" value="ECO:0007669"/>
    <property type="project" value="UniProtKB-KW"/>
</dbReference>
<dbReference type="CDD" id="cd12378">
    <property type="entry name" value="RRM1_I_PABPs"/>
    <property type="match status" value="1"/>
</dbReference>
<dbReference type="CDD" id="cd12379">
    <property type="entry name" value="RRM2_I_PABPs"/>
    <property type="match status" value="1"/>
</dbReference>
<dbReference type="CDD" id="cd12380">
    <property type="entry name" value="RRM3_I_PABPs"/>
    <property type="match status" value="1"/>
</dbReference>
<dbReference type="CDD" id="cd12381">
    <property type="entry name" value="RRM4_I_PABPs"/>
    <property type="match status" value="1"/>
</dbReference>
<dbReference type="FunFam" id="1.10.1900.10:FF:000004">
    <property type="entry name" value="Polyadenylate-binding protein"/>
    <property type="match status" value="1"/>
</dbReference>
<dbReference type="FunFam" id="3.30.70.330:FF:000003">
    <property type="entry name" value="Polyadenylate-binding protein"/>
    <property type="match status" value="1"/>
</dbReference>
<dbReference type="FunFam" id="3.30.70.330:FF:000355">
    <property type="entry name" value="Polyadenylate-binding protein"/>
    <property type="match status" value="1"/>
</dbReference>
<dbReference type="FunFam" id="3.30.70.330:FF:000384">
    <property type="entry name" value="Polyadenylate-binding protein"/>
    <property type="match status" value="1"/>
</dbReference>
<dbReference type="Gene3D" id="3.30.70.330">
    <property type="match status" value="4"/>
</dbReference>
<dbReference type="Gene3D" id="1.10.1900.10">
    <property type="entry name" value="c-terminal domain of poly(a) binding protein"/>
    <property type="match status" value="1"/>
</dbReference>
<dbReference type="InterPro" id="IPR012677">
    <property type="entry name" value="Nucleotide-bd_a/b_plait_sf"/>
</dbReference>
<dbReference type="InterPro" id="IPR036053">
    <property type="entry name" value="PABP-dom"/>
</dbReference>
<dbReference type="InterPro" id="IPR006515">
    <property type="entry name" value="PABP_1234"/>
</dbReference>
<dbReference type="InterPro" id="IPR002004">
    <property type="entry name" value="PABP_HYD_C"/>
</dbReference>
<dbReference type="InterPro" id="IPR034364">
    <property type="entry name" value="PABP_RRM1"/>
</dbReference>
<dbReference type="InterPro" id="IPR035979">
    <property type="entry name" value="RBD_domain_sf"/>
</dbReference>
<dbReference type="InterPro" id="IPR045305">
    <property type="entry name" value="RRM2_I_PABPs"/>
</dbReference>
<dbReference type="InterPro" id="IPR000504">
    <property type="entry name" value="RRM_dom"/>
</dbReference>
<dbReference type="InterPro" id="IPR003954">
    <property type="entry name" value="RRM_dom_euk"/>
</dbReference>
<dbReference type="NCBIfam" id="TIGR01628">
    <property type="entry name" value="PABP-1234"/>
    <property type="match status" value="1"/>
</dbReference>
<dbReference type="PANTHER" id="PTHR24012">
    <property type="entry name" value="RNA BINDING PROTEIN"/>
    <property type="match status" value="1"/>
</dbReference>
<dbReference type="Pfam" id="PF00658">
    <property type="entry name" value="MLLE"/>
    <property type="match status" value="1"/>
</dbReference>
<dbReference type="Pfam" id="PF00076">
    <property type="entry name" value="RRM_1"/>
    <property type="match status" value="5"/>
</dbReference>
<dbReference type="SMART" id="SM00517">
    <property type="entry name" value="PolyA"/>
    <property type="match status" value="1"/>
</dbReference>
<dbReference type="SMART" id="SM00360">
    <property type="entry name" value="RRM"/>
    <property type="match status" value="4"/>
</dbReference>
<dbReference type="SMART" id="SM00361">
    <property type="entry name" value="RRM_1"/>
    <property type="match status" value="3"/>
</dbReference>
<dbReference type="SUPFAM" id="SSF63570">
    <property type="entry name" value="PABC (PABP) domain"/>
    <property type="match status" value="1"/>
</dbReference>
<dbReference type="SUPFAM" id="SSF54928">
    <property type="entry name" value="RNA-binding domain, RBD"/>
    <property type="match status" value="3"/>
</dbReference>
<dbReference type="PROSITE" id="PS51309">
    <property type="entry name" value="PABC"/>
    <property type="match status" value="1"/>
</dbReference>
<dbReference type="PROSITE" id="PS50102">
    <property type="entry name" value="RRM"/>
    <property type="match status" value="4"/>
</dbReference>
<evidence type="ECO:0000250" key="1"/>
<evidence type="ECO:0000255" key="2">
    <source>
        <dbReference type="PROSITE-ProRule" id="PRU00176"/>
    </source>
</evidence>
<evidence type="ECO:0000255" key="3">
    <source>
        <dbReference type="PROSITE-ProRule" id="PRU00641"/>
    </source>
</evidence>
<evidence type="ECO:0000256" key="4">
    <source>
        <dbReference type="SAM" id="MobiDB-lite"/>
    </source>
</evidence>
<evidence type="ECO:0000305" key="5"/>
<keyword id="KW-0963">Cytoplasm</keyword>
<keyword id="KW-0507">mRNA processing</keyword>
<keyword id="KW-0509">mRNA transport</keyword>
<keyword id="KW-0539">Nucleus</keyword>
<keyword id="KW-1185">Reference proteome</keyword>
<keyword id="KW-0677">Repeat</keyword>
<keyword id="KW-0694">RNA-binding</keyword>
<keyword id="KW-0810">Translation regulation</keyword>
<keyword id="KW-0813">Transport</keyword>
<sequence length="768" mass="82907">MSAETATNPPVDTTPGAAPESATNGSNANVAADTTAGEASQTTSSTTPTAQPHSASLYVGELDPSVTEAMLFELFSSIGQVASIRVCRDAVTRRSLGYAYVNYNNTADGERALEDLNYTLIKGRPCRIMWSQRDPALRKTGQGNVFIKNLDTAIDNKALHDTFAAFGNILSCKVAQDEFGNSKGYGFVHYETAEAAQNAIKHVNGMLLNDKKVFVGHHIAKKDRQSKFEEMKANFTNVYVKNIDQDTTEEEFRDLFEKFGEITSATLARDAESGKSRGFGFVNFTSHDNAAAAVEALNDKDFKGQKLYVGRAQKKHEREEELRKQYEAARIEKASKYQGVNLYIKNLSDDIDDEKLRELFSSYGTITSAKVMRDFAPESTSDSEKEAKKDSKEPETKEEEPKDEAGDNAENKDNKENKAESKKSEKKPLGKSKGFGFVCFSSPDEASKAVTEMNQRMVHGKPLYVALAQRKDVRRSQLEASIQARNTIRQQQAAAAAGMPQPFMQPAVFYGPGQQNFIPNQRGGMPFQQPGMVIPGMPGGRHGQFGGFPGQQGGRGMNPNQQIPPNAYGIGAQGLPMGMQGAGIPNGLNYPQMGQVQAPFGRGRGQAPSGQGMPPNVQGMGPGGQYGRGMPVQQGMGRPGQAGRGQGAPAQAVGQRDENASPNGLTLQVLNAAPPAQQKQMLGEAIYPKIQAQQPELAGKITGMLLEMDNAELLALVDDDAALKAKVDEALTVYDEYVKNKGGDSGEPAADANKSKDASQETAEETKS</sequence>
<reference key="1">
    <citation type="journal article" date="2009" name="Genome Res.">
        <title>Comparative genomic analyses of the human fungal pathogens Coccidioides and their relatives.</title>
        <authorList>
            <person name="Sharpton T.J."/>
            <person name="Stajich J.E."/>
            <person name="Rounsley S.D."/>
            <person name="Gardner M.J."/>
            <person name="Wortman J.R."/>
            <person name="Jordar V.S."/>
            <person name="Maiti R."/>
            <person name="Kodira C.D."/>
            <person name="Neafsey D.E."/>
            <person name="Zeng Q."/>
            <person name="Hung C.-Y."/>
            <person name="McMahan C."/>
            <person name="Muszewska A."/>
            <person name="Grynberg M."/>
            <person name="Mandel M.A."/>
            <person name="Kellner E.M."/>
            <person name="Barker B.M."/>
            <person name="Galgiani J.N."/>
            <person name="Orbach M.J."/>
            <person name="Kirkland T.N."/>
            <person name="Cole G.T."/>
            <person name="Henn M.R."/>
            <person name="Birren B.W."/>
            <person name="Taylor J.W."/>
        </authorList>
    </citation>
    <scope>NUCLEOTIDE SEQUENCE [LARGE SCALE GENOMIC DNA]</scope>
    <source>
        <strain>RS</strain>
    </source>
</reference>
<reference key="2">
    <citation type="journal article" date="2010" name="Genome Res.">
        <title>Population genomic sequencing of Coccidioides fungi reveals recent hybridization and transposon control.</title>
        <authorList>
            <person name="Neafsey D.E."/>
            <person name="Barker B.M."/>
            <person name="Sharpton T.J."/>
            <person name="Stajich J.E."/>
            <person name="Park D.J."/>
            <person name="Whiston E."/>
            <person name="Hung C.-Y."/>
            <person name="McMahan C."/>
            <person name="White J."/>
            <person name="Sykes S."/>
            <person name="Heiman D."/>
            <person name="Young S."/>
            <person name="Zeng Q."/>
            <person name="Abouelleil A."/>
            <person name="Aftuck L."/>
            <person name="Bessette D."/>
            <person name="Brown A."/>
            <person name="FitzGerald M."/>
            <person name="Lui A."/>
            <person name="Macdonald J.P."/>
            <person name="Priest M."/>
            <person name="Orbach M.J."/>
            <person name="Galgiani J.N."/>
            <person name="Kirkland T.N."/>
            <person name="Cole G.T."/>
            <person name="Birren B.W."/>
            <person name="Henn M.R."/>
            <person name="Taylor J.W."/>
            <person name="Rounsley S.D."/>
        </authorList>
    </citation>
    <scope>GENOME REANNOTATION</scope>
    <source>
        <strain>RS</strain>
    </source>
</reference>
<organism>
    <name type="scientific">Coccidioides immitis (strain RS)</name>
    <name type="common">Valley fever fungus</name>
    <dbReference type="NCBI Taxonomy" id="246410"/>
    <lineage>
        <taxon>Eukaryota</taxon>
        <taxon>Fungi</taxon>
        <taxon>Dikarya</taxon>
        <taxon>Ascomycota</taxon>
        <taxon>Pezizomycotina</taxon>
        <taxon>Eurotiomycetes</taxon>
        <taxon>Eurotiomycetidae</taxon>
        <taxon>Onygenales</taxon>
        <taxon>Onygenaceae</taxon>
        <taxon>Coccidioides</taxon>
    </lineage>
</organism>
<comment type="function">
    <text evidence="1">Binds the poly(A) tail of mRNA. Appears to be an important mediator of the multiple roles of the poly(A) tail in mRNA biogenesis, stability and translation. In the nucleus, involved in both mRNA cleavage and polyadenylation. Is also required for efficient mRNA export to the cytoplasm. Acts in concert with a poly(A)-specific nuclease (PAN) to affect poly(A) tail shortening, which may occur concomitantly with either nucleocytoplasmic mRNA transport or translational initiation. In the cytoplasm, stimulates translation initiation and regulates mRNA decay through translation termination-coupled poly(A) shortening, probably mediated by PAN (By similarity).</text>
</comment>
<comment type="subcellular location">
    <subcellularLocation>
        <location evidence="1">Cytoplasm</location>
    </subcellularLocation>
    <subcellularLocation>
        <location evidence="1">Nucleus</location>
    </subcellularLocation>
</comment>
<comment type="similarity">
    <text evidence="5">Belongs to the polyadenylate-binding protein type-1 family.</text>
</comment>